<name>LSRB_SALPB</name>
<dbReference type="EMBL" id="CP000886">
    <property type="protein sequence ID" value="ABX70342.1"/>
    <property type="status" value="ALT_INIT"/>
    <property type="molecule type" value="Genomic_DNA"/>
</dbReference>
<dbReference type="RefSeq" id="WP_000090740.1">
    <property type="nucleotide sequence ID" value="NC_010102.1"/>
</dbReference>
<dbReference type="SMR" id="A9MZG4"/>
<dbReference type="KEGG" id="spq:SPAB_05051"/>
<dbReference type="PATRIC" id="fig|1016998.12.peg.4741"/>
<dbReference type="HOGENOM" id="CLU_037628_3_0_6"/>
<dbReference type="BioCyc" id="SENT1016998:SPAB_RS20555-MONOMER"/>
<dbReference type="Proteomes" id="UP000008556">
    <property type="component" value="Chromosome"/>
</dbReference>
<dbReference type="GO" id="GO:0043190">
    <property type="term" value="C:ATP-binding cassette (ABC) transporter complex"/>
    <property type="evidence" value="ECO:0007669"/>
    <property type="project" value="InterPro"/>
</dbReference>
<dbReference type="GO" id="GO:0030288">
    <property type="term" value="C:outer membrane-bounded periplasmic space"/>
    <property type="evidence" value="ECO:0007669"/>
    <property type="project" value="TreeGrafter"/>
</dbReference>
<dbReference type="GO" id="GO:0030246">
    <property type="term" value="F:carbohydrate binding"/>
    <property type="evidence" value="ECO:0007669"/>
    <property type="project" value="TreeGrafter"/>
</dbReference>
<dbReference type="CDD" id="cd20003">
    <property type="entry name" value="PBP1_LsrB_Quorum_Sensing"/>
    <property type="match status" value="1"/>
</dbReference>
<dbReference type="Gene3D" id="3.40.50.2300">
    <property type="match status" value="2"/>
</dbReference>
<dbReference type="InterPro" id="IPR050555">
    <property type="entry name" value="Bact_Solute-Bind_Prot2"/>
</dbReference>
<dbReference type="InterPro" id="IPR030159">
    <property type="entry name" value="LsrB"/>
</dbReference>
<dbReference type="InterPro" id="IPR028082">
    <property type="entry name" value="Peripla_BP_I"/>
</dbReference>
<dbReference type="InterPro" id="IPR025997">
    <property type="entry name" value="SBP_2_dom"/>
</dbReference>
<dbReference type="NCBIfam" id="NF011937">
    <property type="entry name" value="PRK15408.1"/>
    <property type="match status" value="1"/>
</dbReference>
<dbReference type="PANTHER" id="PTHR30036:SF7">
    <property type="entry name" value="ABC TRANSPORTER PERIPLASMIC-BINDING PROTEIN YPHF"/>
    <property type="match status" value="1"/>
</dbReference>
<dbReference type="PANTHER" id="PTHR30036">
    <property type="entry name" value="D-XYLOSE-BINDING PERIPLASMIC PROTEIN"/>
    <property type="match status" value="1"/>
</dbReference>
<dbReference type="Pfam" id="PF13407">
    <property type="entry name" value="Peripla_BP_4"/>
    <property type="match status" value="1"/>
</dbReference>
<dbReference type="SUPFAM" id="SSF53822">
    <property type="entry name" value="Periplasmic binding protein-like I"/>
    <property type="match status" value="1"/>
</dbReference>
<organism>
    <name type="scientific">Salmonella paratyphi B (strain ATCC BAA-1250 / SPB7)</name>
    <dbReference type="NCBI Taxonomy" id="1016998"/>
    <lineage>
        <taxon>Bacteria</taxon>
        <taxon>Pseudomonadati</taxon>
        <taxon>Pseudomonadota</taxon>
        <taxon>Gammaproteobacteria</taxon>
        <taxon>Enterobacterales</taxon>
        <taxon>Enterobacteriaceae</taxon>
        <taxon>Salmonella</taxon>
    </lineage>
</organism>
<feature type="signal peptide" evidence="2">
    <location>
        <begin position="1"/>
        <end position="26"/>
    </location>
</feature>
<feature type="chain" id="PRO_0000351328" description="Autoinducer 2-binding protein LsrB">
    <location>
        <begin position="27"/>
        <end position="340"/>
    </location>
</feature>
<sequence length="340" mass="36787">MARHSIKMIALLTAFGLASAVMTVQAAERIAFIPKLVGVGFFTSGGNGAQEAGKALGIDVTYDGPTEPSVSGQVQLVNNFVNQGYDAIIVSAVSPDGLCPALKRAMQRGVKILTWDSDTKPECRSYYINQGTPKQLGSMLVEMAAHQVDKEKAKVAFFYSSPTVTDQNQWVKEAKAKISQEHPGWEIVTTQFGYNDATKSLQTAEGIIKAYPDLDAIIAPDANALPAAAQAAENLKRNNLAIVGFSTPNVMRPYVQRGTVKEFGLWDVVQQGKISVYVANALLKNMPMNVGDSLDIPGIGKVTVSPNSEQGYHYEAKGNGIVLLPERVIFNKNNIDKYDF</sequence>
<gene>
    <name type="primary">lsrB</name>
    <name type="ordered locus">SPAB_05051</name>
</gene>
<comment type="function">
    <text evidence="1">Part of the ABC transporter complex LsrABCD involved in autoinducer 2 (AI-2) import. Binds AI-2 and delivers it to the LsrC and LsrD permeases (By similarity).</text>
</comment>
<comment type="subunit">
    <text evidence="1">The complex is composed of two ATP-binding proteins (LsrA), two transmembrane proteins (LsrC and LsrD) and a solute-binding protein (LsrB).</text>
</comment>
<comment type="subcellular location">
    <subcellularLocation>
        <location evidence="3">Periplasm</location>
    </subcellularLocation>
</comment>
<comment type="similarity">
    <text evidence="3">Belongs to the bacterial solute-binding protein 2 family.</text>
</comment>
<comment type="sequence caution" evidence="3">
    <conflict type="erroneous initiation">
        <sequence resource="EMBL-CDS" id="ABX70342"/>
    </conflict>
</comment>
<protein>
    <recommendedName>
        <fullName>Autoinducer 2-binding protein LsrB</fullName>
        <shortName>AI-2-binding protein LsrB</shortName>
    </recommendedName>
</protein>
<proteinExistence type="inferred from homology"/>
<accession>A9MZG4</accession>
<keyword id="KW-0574">Periplasm</keyword>
<keyword id="KW-0732">Signal</keyword>
<reference key="1">
    <citation type="submission" date="2007-11" db="EMBL/GenBank/DDBJ databases">
        <authorList>
            <consortium name="The Salmonella enterica serovar Paratyphi B Genome Sequencing Project"/>
            <person name="McClelland M."/>
            <person name="Sanderson E.K."/>
            <person name="Porwollik S."/>
            <person name="Spieth J."/>
            <person name="Clifton W.S."/>
            <person name="Fulton R."/>
            <person name="Cordes M."/>
            <person name="Wollam A."/>
            <person name="Shah N."/>
            <person name="Pepin K."/>
            <person name="Bhonagiri V."/>
            <person name="Nash W."/>
            <person name="Johnson M."/>
            <person name="Thiruvilangam P."/>
            <person name="Wilson R."/>
        </authorList>
    </citation>
    <scope>NUCLEOTIDE SEQUENCE [LARGE SCALE GENOMIC DNA]</scope>
    <source>
        <strain>ATCC BAA-1250 / SPB7</strain>
    </source>
</reference>
<evidence type="ECO:0000250" key="1"/>
<evidence type="ECO:0000255" key="2"/>
<evidence type="ECO:0000305" key="3"/>